<feature type="chain" id="PRO_1000043691" description="GTP cyclohydrolase 1">
    <location>
        <begin position="1"/>
        <end position="222"/>
    </location>
</feature>
<feature type="binding site" evidence="2">
    <location>
        <position position="111"/>
    </location>
    <ligand>
        <name>Zn(2+)</name>
        <dbReference type="ChEBI" id="CHEBI:29105"/>
    </ligand>
</feature>
<feature type="binding site" evidence="2">
    <location>
        <position position="114"/>
    </location>
    <ligand>
        <name>Zn(2+)</name>
        <dbReference type="ChEBI" id="CHEBI:29105"/>
    </ligand>
</feature>
<feature type="binding site" evidence="2">
    <location>
        <position position="182"/>
    </location>
    <ligand>
        <name>Zn(2+)</name>
        <dbReference type="ChEBI" id="CHEBI:29105"/>
    </ligand>
</feature>
<sequence length="222" mass="24831">MPSLSKEAALVHEALVARGLETPLRPPVHEMDNETRKSLIAGHMTEIMQLLNLDLADDSLMETPHRIAKMYVDEIFSGLDYANFPKITLIENKMKVDEMVTVRDITLTSTCEHHFVTIDGKATVAYIPKDSVIGLSKINRIVQFFAQRPQVQERLTQQILIALQTLLGTNNVAVSIDAVHYCVKARGIRDATSATTTTSLGGLFKSSQNTRHEFLRAVRHHN</sequence>
<reference key="1">
    <citation type="journal article" date="2006" name="Proc. Natl. Acad. Sci. U.S.A.">
        <title>Identification of genes subject to positive selection in uropathogenic strains of Escherichia coli: a comparative genomics approach.</title>
        <authorList>
            <person name="Chen S.L."/>
            <person name="Hung C.-S."/>
            <person name="Xu J."/>
            <person name="Reigstad C.S."/>
            <person name="Magrini V."/>
            <person name="Sabo A."/>
            <person name="Blasiar D."/>
            <person name="Bieri T."/>
            <person name="Meyer R.R."/>
            <person name="Ozersky P."/>
            <person name="Armstrong J.R."/>
            <person name="Fulton R.S."/>
            <person name="Latreille J.P."/>
            <person name="Spieth J."/>
            <person name="Hooton T.M."/>
            <person name="Mardis E.R."/>
            <person name="Hultgren S.J."/>
            <person name="Gordon J.I."/>
        </authorList>
    </citation>
    <scope>NUCLEOTIDE SEQUENCE [LARGE SCALE GENOMIC DNA]</scope>
    <source>
        <strain>UTI89 / UPEC</strain>
    </source>
</reference>
<proteinExistence type="inferred from homology"/>
<protein>
    <recommendedName>
        <fullName evidence="2">GTP cyclohydrolase 1</fullName>
        <ecNumber evidence="2">3.5.4.16</ecNumber>
    </recommendedName>
    <alternativeName>
        <fullName evidence="2">GTP cyclohydrolase I</fullName>
        <shortName evidence="2">GTP-CH-I</shortName>
    </alternativeName>
</protein>
<accession>Q1R9R9</accession>
<comment type="catalytic activity">
    <reaction evidence="2">
        <text>GTP + H2O = 7,8-dihydroneopterin 3'-triphosphate + formate + H(+)</text>
        <dbReference type="Rhea" id="RHEA:17473"/>
        <dbReference type="ChEBI" id="CHEBI:15377"/>
        <dbReference type="ChEBI" id="CHEBI:15378"/>
        <dbReference type="ChEBI" id="CHEBI:15740"/>
        <dbReference type="ChEBI" id="CHEBI:37565"/>
        <dbReference type="ChEBI" id="CHEBI:58462"/>
        <dbReference type="EC" id="3.5.4.16"/>
    </reaction>
</comment>
<comment type="pathway">
    <text evidence="2">Cofactor biosynthesis; 7,8-dihydroneopterin triphosphate biosynthesis; 7,8-dihydroneopterin triphosphate from GTP: step 1/1.</text>
</comment>
<comment type="subunit">
    <text evidence="1">Toroid-shaped homodecamer, composed of two pentamers of five dimers.</text>
</comment>
<comment type="similarity">
    <text evidence="2">Belongs to the GTP cyclohydrolase I family.</text>
</comment>
<gene>
    <name evidence="2" type="primary">folE</name>
    <name type="ordered locus">UTI89_C2427</name>
</gene>
<evidence type="ECO:0000250" key="1"/>
<evidence type="ECO:0000255" key="2">
    <source>
        <dbReference type="HAMAP-Rule" id="MF_00223"/>
    </source>
</evidence>
<organism>
    <name type="scientific">Escherichia coli (strain UTI89 / UPEC)</name>
    <dbReference type="NCBI Taxonomy" id="364106"/>
    <lineage>
        <taxon>Bacteria</taxon>
        <taxon>Pseudomonadati</taxon>
        <taxon>Pseudomonadota</taxon>
        <taxon>Gammaproteobacteria</taxon>
        <taxon>Enterobacterales</taxon>
        <taxon>Enterobacteriaceae</taxon>
        <taxon>Escherichia</taxon>
    </lineage>
</organism>
<name>GCH1_ECOUT</name>
<dbReference type="EC" id="3.5.4.16" evidence="2"/>
<dbReference type="EMBL" id="CP000243">
    <property type="protein sequence ID" value="ABE07895.1"/>
    <property type="molecule type" value="Genomic_DNA"/>
</dbReference>
<dbReference type="RefSeq" id="WP_001139613.1">
    <property type="nucleotide sequence ID" value="NZ_CP064825.1"/>
</dbReference>
<dbReference type="SMR" id="Q1R9R9"/>
<dbReference type="GeneID" id="93775029"/>
<dbReference type="KEGG" id="eci:UTI89_C2427"/>
<dbReference type="HOGENOM" id="CLU_049768_3_2_6"/>
<dbReference type="UniPathway" id="UPA00848">
    <property type="reaction ID" value="UER00151"/>
</dbReference>
<dbReference type="Proteomes" id="UP000001952">
    <property type="component" value="Chromosome"/>
</dbReference>
<dbReference type="GO" id="GO:0005737">
    <property type="term" value="C:cytoplasm"/>
    <property type="evidence" value="ECO:0007669"/>
    <property type="project" value="TreeGrafter"/>
</dbReference>
<dbReference type="GO" id="GO:0005525">
    <property type="term" value="F:GTP binding"/>
    <property type="evidence" value="ECO:0007669"/>
    <property type="project" value="UniProtKB-KW"/>
</dbReference>
<dbReference type="GO" id="GO:0003934">
    <property type="term" value="F:GTP cyclohydrolase I activity"/>
    <property type="evidence" value="ECO:0007669"/>
    <property type="project" value="UniProtKB-UniRule"/>
</dbReference>
<dbReference type="GO" id="GO:0008270">
    <property type="term" value="F:zinc ion binding"/>
    <property type="evidence" value="ECO:0007669"/>
    <property type="project" value="UniProtKB-UniRule"/>
</dbReference>
<dbReference type="GO" id="GO:0006730">
    <property type="term" value="P:one-carbon metabolic process"/>
    <property type="evidence" value="ECO:0007669"/>
    <property type="project" value="UniProtKB-UniRule"/>
</dbReference>
<dbReference type="GO" id="GO:0006729">
    <property type="term" value="P:tetrahydrobiopterin biosynthetic process"/>
    <property type="evidence" value="ECO:0007669"/>
    <property type="project" value="TreeGrafter"/>
</dbReference>
<dbReference type="GO" id="GO:0046654">
    <property type="term" value="P:tetrahydrofolate biosynthetic process"/>
    <property type="evidence" value="ECO:0007669"/>
    <property type="project" value="UniProtKB-UniRule"/>
</dbReference>
<dbReference type="CDD" id="cd00642">
    <property type="entry name" value="GTP_cyclohydro1"/>
    <property type="match status" value="1"/>
</dbReference>
<dbReference type="FunFam" id="1.10.286.10:FF:000002">
    <property type="entry name" value="GTP cyclohydrolase 1"/>
    <property type="match status" value="1"/>
</dbReference>
<dbReference type="FunFam" id="3.30.1130.10:FF:000001">
    <property type="entry name" value="GTP cyclohydrolase 1"/>
    <property type="match status" value="1"/>
</dbReference>
<dbReference type="Gene3D" id="1.10.286.10">
    <property type="match status" value="1"/>
</dbReference>
<dbReference type="Gene3D" id="3.30.1130.10">
    <property type="match status" value="1"/>
</dbReference>
<dbReference type="HAMAP" id="MF_00223">
    <property type="entry name" value="FolE"/>
    <property type="match status" value="1"/>
</dbReference>
<dbReference type="InterPro" id="IPR043133">
    <property type="entry name" value="GTP-CH-I_C/QueF"/>
</dbReference>
<dbReference type="InterPro" id="IPR043134">
    <property type="entry name" value="GTP-CH-I_N"/>
</dbReference>
<dbReference type="InterPro" id="IPR001474">
    <property type="entry name" value="GTP_CycHdrlase_I"/>
</dbReference>
<dbReference type="InterPro" id="IPR018234">
    <property type="entry name" value="GTP_CycHdrlase_I_CS"/>
</dbReference>
<dbReference type="InterPro" id="IPR020602">
    <property type="entry name" value="GTP_CycHdrlase_I_dom"/>
</dbReference>
<dbReference type="NCBIfam" id="TIGR00063">
    <property type="entry name" value="folE"/>
    <property type="match status" value="1"/>
</dbReference>
<dbReference type="NCBIfam" id="NF006824">
    <property type="entry name" value="PRK09347.1-1"/>
    <property type="match status" value="1"/>
</dbReference>
<dbReference type="NCBIfam" id="NF006826">
    <property type="entry name" value="PRK09347.1-3"/>
    <property type="match status" value="1"/>
</dbReference>
<dbReference type="PANTHER" id="PTHR11109:SF7">
    <property type="entry name" value="GTP CYCLOHYDROLASE 1"/>
    <property type="match status" value="1"/>
</dbReference>
<dbReference type="PANTHER" id="PTHR11109">
    <property type="entry name" value="GTP CYCLOHYDROLASE I"/>
    <property type="match status" value="1"/>
</dbReference>
<dbReference type="Pfam" id="PF01227">
    <property type="entry name" value="GTP_cyclohydroI"/>
    <property type="match status" value="1"/>
</dbReference>
<dbReference type="SUPFAM" id="SSF55620">
    <property type="entry name" value="Tetrahydrobiopterin biosynthesis enzymes-like"/>
    <property type="match status" value="1"/>
</dbReference>
<dbReference type="PROSITE" id="PS00859">
    <property type="entry name" value="GTP_CYCLOHYDROL_1_1"/>
    <property type="match status" value="1"/>
</dbReference>
<dbReference type="PROSITE" id="PS00860">
    <property type="entry name" value="GTP_CYCLOHYDROL_1_2"/>
    <property type="match status" value="1"/>
</dbReference>
<keyword id="KW-0342">GTP-binding</keyword>
<keyword id="KW-0378">Hydrolase</keyword>
<keyword id="KW-0479">Metal-binding</keyword>
<keyword id="KW-0547">Nucleotide-binding</keyword>
<keyword id="KW-0554">One-carbon metabolism</keyword>
<keyword id="KW-0862">Zinc</keyword>